<organism>
    <name type="scientific">Bos taurus</name>
    <name type="common">Bovine</name>
    <dbReference type="NCBI Taxonomy" id="9913"/>
    <lineage>
        <taxon>Eukaryota</taxon>
        <taxon>Metazoa</taxon>
        <taxon>Chordata</taxon>
        <taxon>Craniata</taxon>
        <taxon>Vertebrata</taxon>
        <taxon>Euteleostomi</taxon>
        <taxon>Mammalia</taxon>
        <taxon>Eutheria</taxon>
        <taxon>Laurasiatheria</taxon>
        <taxon>Artiodactyla</taxon>
        <taxon>Ruminantia</taxon>
        <taxon>Pecora</taxon>
        <taxon>Bovidae</taxon>
        <taxon>Bovinae</taxon>
        <taxon>Bos</taxon>
    </lineage>
</organism>
<protein>
    <recommendedName>
        <fullName>Polyubiquitin-C</fullName>
    </recommendedName>
    <component>
        <recommendedName>
            <fullName>Ubiquitin-related</fullName>
        </recommendedName>
    </component>
    <component>
        <recommendedName>
            <fullName>Ubiquitin</fullName>
        </recommendedName>
    </component>
</protein>
<dbReference type="EMBL" id="AAFC03038308">
    <property type="status" value="NOT_ANNOTATED_CDS"/>
    <property type="molecule type" value="Genomic_DNA"/>
</dbReference>
<dbReference type="EMBL" id="M62428">
    <property type="protein sequence ID" value="AAA30719.1"/>
    <property type="molecule type" value="mRNA"/>
</dbReference>
<dbReference type="PIR" id="A90388">
    <property type="entry name" value="UQBO"/>
</dbReference>
<dbReference type="RefSeq" id="NP_001193236.1">
    <property type="nucleotide sequence ID" value="NM_001206307.2"/>
</dbReference>
<dbReference type="PDB" id="1AAR">
    <property type="method" value="X-ray"/>
    <property type="resolution" value="2.30 A"/>
    <property type="chains" value="A/B=1-76"/>
</dbReference>
<dbReference type="PDB" id="1E0Q">
    <property type="method" value="NMR"/>
    <property type="chains" value="A=1-17"/>
</dbReference>
<dbReference type="PDB" id="1P3Q">
    <property type="method" value="X-ray"/>
    <property type="resolution" value="1.70 A"/>
    <property type="chains" value="U/V=1-76"/>
</dbReference>
<dbReference type="PDB" id="1UZX">
    <property type="method" value="X-ray"/>
    <property type="resolution" value="1.85 A"/>
    <property type="chains" value="B=1-76"/>
</dbReference>
<dbReference type="PDB" id="1V80">
    <property type="method" value="NMR"/>
    <property type="chains" value="A=1-76"/>
</dbReference>
<dbReference type="PDB" id="1V81">
    <property type="method" value="NMR"/>
    <property type="chains" value="A=1-76"/>
</dbReference>
<dbReference type="PDB" id="1WR6">
    <property type="method" value="X-ray"/>
    <property type="resolution" value="2.60 A"/>
    <property type="chains" value="E/F/G/H=1-76"/>
</dbReference>
<dbReference type="PDB" id="1WRD">
    <property type="method" value="X-ray"/>
    <property type="resolution" value="1.75 A"/>
    <property type="chains" value="B=1-76"/>
</dbReference>
<dbReference type="PDB" id="1YD8">
    <property type="method" value="X-ray"/>
    <property type="resolution" value="2.80 A"/>
    <property type="chains" value="U/V=1-76"/>
</dbReference>
<dbReference type="PDB" id="2C7M">
    <property type="method" value="X-ray"/>
    <property type="resolution" value="2.40 A"/>
    <property type="chains" value="B=1-76"/>
</dbReference>
<dbReference type="PDB" id="2C7N">
    <property type="method" value="X-ray"/>
    <property type="resolution" value="2.10 A"/>
    <property type="chains" value="B/D/F/H/J/L=1-76"/>
</dbReference>
<dbReference type="PDB" id="2D3G">
    <property type="method" value="X-ray"/>
    <property type="resolution" value="1.70 A"/>
    <property type="chains" value="A/B=1-76"/>
</dbReference>
<dbReference type="PDB" id="2DX5">
    <property type="method" value="X-ray"/>
    <property type="resolution" value="3.35 A"/>
    <property type="chains" value="B=1-76"/>
</dbReference>
<dbReference type="PDB" id="2FID">
    <property type="method" value="X-ray"/>
    <property type="resolution" value="2.80 A"/>
    <property type="chains" value="A=1-76"/>
</dbReference>
<dbReference type="PDB" id="2FIF">
    <property type="method" value="X-ray"/>
    <property type="resolution" value="2.49 A"/>
    <property type="chains" value="A/C/E=1-76"/>
</dbReference>
<dbReference type="PDB" id="2HD5">
    <property type="method" value="X-ray"/>
    <property type="resolution" value="1.85 A"/>
    <property type="chains" value="B=1-76"/>
</dbReference>
<dbReference type="PDB" id="2OOB">
    <property type="method" value="X-ray"/>
    <property type="resolution" value="1.90 A"/>
    <property type="chains" value="B=1-76"/>
</dbReference>
<dbReference type="PDB" id="2QHO">
    <property type="method" value="X-ray"/>
    <property type="resolution" value="1.85 A"/>
    <property type="chains" value="A/C/E/G=1-76"/>
</dbReference>
<dbReference type="PDB" id="2WWZ">
    <property type="method" value="X-ray"/>
    <property type="resolution" value="1.40 A"/>
    <property type="chains" value="A/B=1-76"/>
</dbReference>
<dbReference type="PDB" id="2WX0">
    <property type="method" value="X-ray"/>
    <property type="resolution" value="2.40 A"/>
    <property type="chains" value="A/B/E/F=1-76"/>
</dbReference>
<dbReference type="PDB" id="2WX1">
    <property type="method" value="X-ray"/>
    <property type="resolution" value="3.00 A"/>
    <property type="chains" value="A/B=1-76"/>
</dbReference>
<dbReference type="PDB" id="2XBB">
    <property type="method" value="X-ray"/>
    <property type="resolution" value="2.68 A"/>
    <property type="chains" value="C/D=1-76"/>
</dbReference>
<dbReference type="PDB" id="2ZCC">
    <property type="method" value="X-ray"/>
    <property type="resolution" value="1.40 A"/>
    <property type="chains" value="A/B/C=1-76"/>
</dbReference>
<dbReference type="PDB" id="3H1U">
    <property type="method" value="X-ray"/>
    <property type="resolution" value="3.00 A"/>
    <property type="chains" value="A/B=1-76"/>
</dbReference>
<dbReference type="PDB" id="3M3J">
    <property type="method" value="X-ray"/>
    <property type="resolution" value="1.60 A"/>
    <property type="chains" value="A/B/C/D/E/F=1-76"/>
</dbReference>
<dbReference type="PDB" id="4BBN">
    <property type="method" value="X-ray"/>
    <property type="resolution" value="2.51 A"/>
    <property type="chains" value="C=1-76, F=1-75"/>
</dbReference>
<dbReference type="PDB" id="4XKH">
    <property type="method" value="X-ray"/>
    <property type="resolution" value="3.00 A"/>
    <property type="chains" value="A/B/D/F/G/I=1-76"/>
</dbReference>
<dbReference type="PDB" id="4XYZ">
    <property type="method" value="X-ray"/>
    <property type="resolution" value="1.65 A"/>
    <property type="chains" value="A/B=609-684"/>
</dbReference>
<dbReference type="PDB" id="6A42">
    <property type="method" value="X-ray"/>
    <property type="resolution" value="1.70 A"/>
    <property type="chains" value="A=1-76"/>
</dbReference>
<dbReference type="PDBsum" id="1AAR"/>
<dbReference type="PDBsum" id="1E0Q"/>
<dbReference type="PDBsum" id="1P3Q"/>
<dbReference type="PDBsum" id="1UZX"/>
<dbReference type="PDBsum" id="1V80"/>
<dbReference type="PDBsum" id="1V81"/>
<dbReference type="PDBsum" id="1WR6"/>
<dbReference type="PDBsum" id="1WRD"/>
<dbReference type="PDBsum" id="1YD8"/>
<dbReference type="PDBsum" id="2C7M"/>
<dbReference type="PDBsum" id="2C7N"/>
<dbReference type="PDBsum" id="2D3G"/>
<dbReference type="PDBsum" id="2DX5"/>
<dbReference type="PDBsum" id="2FID"/>
<dbReference type="PDBsum" id="2FIF"/>
<dbReference type="PDBsum" id="2HD5"/>
<dbReference type="PDBsum" id="2OOB"/>
<dbReference type="PDBsum" id="2QHO"/>
<dbReference type="PDBsum" id="2WWZ"/>
<dbReference type="PDBsum" id="2WX0"/>
<dbReference type="PDBsum" id="2WX1"/>
<dbReference type="PDBsum" id="2XBB"/>
<dbReference type="PDBsum" id="2ZCC"/>
<dbReference type="PDBsum" id="3H1U"/>
<dbReference type="PDBsum" id="3M3J"/>
<dbReference type="PDBsum" id="4BBN"/>
<dbReference type="PDBsum" id="4XKH"/>
<dbReference type="PDBsum" id="4XYZ"/>
<dbReference type="PDBsum" id="6A42"/>
<dbReference type="SMR" id="P0CH28"/>
<dbReference type="BioGRID" id="160681">
    <property type="interactions" value="18"/>
</dbReference>
<dbReference type="FunCoup" id="P0CH28">
    <property type="interactions" value="1215"/>
</dbReference>
<dbReference type="STRING" id="9913.ENSBTAP00000053003"/>
<dbReference type="Ensembl" id="ENSBTAT00000046011.4">
    <property type="protein sequence ID" value="ENSBTAP00000053003.3"/>
    <property type="gene ID" value="ENSBTAG00000032436.4"/>
</dbReference>
<dbReference type="GeneID" id="444874"/>
<dbReference type="KEGG" id="bta:444874"/>
<dbReference type="CTD" id="7316"/>
<dbReference type="VEuPathDB" id="HostDB:ENSBTAG00000032436"/>
<dbReference type="VGNC" id="VGNC:107263">
    <property type="gene designation" value="UBC"/>
</dbReference>
<dbReference type="GeneTree" id="ENSGT00940000163900"/>
<dbReference type="InParanoid" id="P0CH28"/>
<dbReference type="OMA" id="CIWYCVY"/>
<dbReference type="OrthoDB" id="428577at2759"/>
<dbReference type="Reactome" id="R-BTA-110312">
    <property type="pathway name" value="Translesion synthesis by REV1"/>
</dbReference>
<dbReference type="Reactome" id="R-BTA-110314">
    <property type="pathway name" value="Recognition of DNA damage by PCNA-containing replication complex"/>
</dbReference>
<dbReference type="Reactome" id="R-BTA-110320">
    <property type="pathway name" value="Translesion Synthesis by POLH"/>
</dbReference>
<dbReference type="Reactome" id="R-BTA-1169091">
    <property type="pathway name" value="Activation of NF-kappaB in B cells"/>
</dbReference>
<dbReference type="Reactome" id="R-BTA-1234176">
    <property type="pathway name" value="Oxygen-dependent proline hydroxylation of Hypoxia-inducible Factor Alpha"/>
</dbReference>
<dbReference type="Reactome" id="R-BTA-1253288">
    <property type="pathway name" value="Downregulation of ERBB4 signaling"/>
</dbReference>
<dbReference type="Reactome" id="R-BTA-1295596">
    <property type="pathway name" value="Spry regulation of FGF signaling"/>
</dbReference>
<dbReference type="Reactome" id="R-BTA-1358803">
    <property type="pathway name" value="Downregulation of ERBB2:ERBB3 signaling"/>
</dbReference>
<dbReference type="Reactome" id="R-BTA-168638">
    <property type="pathway name" value="NOD1/2 Signaling Pathway"/>
</dbReference>
<dbReference type="Reactome" id="R-BTA-174048">
    <property type="pathway name" value="APC/C:Cdc20 mediated degradation of Cyclin B"/>
</dbReference>
<dbReference type="Reactome" id="R-BTA-174084">
    <property type="pathway name" value="Autodegradation of Cdh1 by Cdh1:APC/C"/>
</dbReference>
<dbReference type="Reactome" id="R-BTA-174113">
    <property type="pathway name" value="SCF-beta-TrCP mediated degradation of Emi1"/>
</dbReference>
<dbReference type="Reactome" id="R-BTA-174154">
    <property type="pathway name" value="APC/C:Cdc20 mediated degradation of Securin"/>
</dbReference>
<dbReference type="Reactome" id="R-BTA-174178">
    <property type="pathway name" value="APC/C:Cdh1 mediated degradation of Cdc20 and other APC/C:Cdh1 targeted proteins in late mitosis/early G1"/>
</dbReference>
<dbReference type="Reactome" id="R-BTA-174184">
    <property type="pathway name" value="Cdc20:Phospho-APC/C mediated degradation of Cyclin A"/>
</dbReference>
<dbReference type="Reactome" id="R-BTA-179409">
    <property type="pathway name" value="APC-Cdc20 mediated degradation of Nek2A"/>
</dbReference>
<dbReference type="Reactome" id="R-BTA-182971">
    <property type="pathway name" value="EGFR downregulation"/>
</dbReference>
<dbReference type="Reactome" id="R-BTA-187577">
    <property type="pathway name" value="SCF(Skp2)-mediated degradation of p27/p21"/>
</dbReference>
<dbReference type="Reactome" id="R-BTA-195253">
    <property type="pathway name" value="Degradation of beta-catenin by the destruction complex"/>
</dbReference>
<dbReference type="Reactome" id="R-BTA-201681">
    <property type="pathway name" value="TCF dependent signaling in response to WNT"/>
</dbReference>
<dbReference type="Reactome" id="R-BTA-202424">
    <property type="pathway name" value="Downstream TCR signaling"/>
</dbReference>
<dbReference type="Reactome" id="R-BTA-205043">
    <property type="pathway name" value="NRIF signals cell death from the nucleus"/>
</dbReference>
<dbReference type="Reactome" id="R-BTA-209543">
    <property type="pathway name" value="p75NTR recruits signalling complexes"/>
</dbReference>
<dbReference type="Reactome" id="R-BTA-209560">
    <property type="pathway name" value="NF-kB is activated and signals survival"/>
</dbReference>
<dbReference type="Reactome" id="R-BTA-2122948">
    <property type="pathway name" value="Activated NOTCH1 Transmits Signal to the Nucleus"/>
</dbReference>
<dbReference type="Reactome" id="R-BTA-2173788">
    <property type="pathway name" value="Downregulation of TGF-beta receptor signaling"/>
</dbReference>
<dbReference type="Reactome" id="R-BTA-2173791">
    <property type="pathway name" value="TGF-beta receptor signaling in EMT (epithelial to mesenchymal transition)"/>
</dbReference>
<dbReference type="Reactome" id="R-BTA-2173795">
    <property type="pathway name" value="Downregulation of SMAD2/3:SMAD4 transcriptional activity"/>
</dbReference>
<dbReference type="Reactome" id="R-BTA-2173796">
    <property type="pathway name" value="SMAD2/SMAD3:SMAD4 heterotrimer regulates transcription"/>
</dbReference>
<dbReference type="Reactome" id="R-BTA-2467813">
    <property type="pathway name" value="Separation of Sister Chromatids"/>
</dbReference>
<dbReference type="Reactome" id="R-BTA-2559582">
    <property type="pathway name" value="Senescence-Associated Secretory Phenotype (SASP)"/>
</dbReference>
<dbReference type="Reactome" id="R-BTA-2565942">
    <property type="pathway name" value="Regulation of PLK1 Activity at G2/M Transition"/>
</dbReference>
<dbReference type="Reactome" id="R-BTA-2871837">
    <property type="pathway name" value="FCERI mediated NF-kB activation"/>
</dbReference>
<dbReference type="Reactome" id="R-BTA-3134975">
    <property type="pathway name" value="Regulation of innate immune responses to cytosolic DNA"/>
</dbReference>
<dbReference type="Reactome" id="R-BTA-349425">
    <property type="pathway name" value="Autodegradation of the E3 ubiquitin ligase COP1"/>
</dbReference>
<dbReference type="Reactome" id="R-BTA-3769402">
    <property type="pathway name" value="Deactivation of the beta-catenin transactivating complex"/>
</dbReference>
<dbReference type="Reactome" id="R-BTA-382556">
    <property type="pathway name" value="ABC-family proteins mediated transport"/>
</dbReference>
<dbReference type="Reactome" id="R-BTA-450302">
    <property type="pathway name" value="activated TAK1 mediates p38 MAPK activation"/>
</dbReference>
<dbReference type="Reactome" id="R-BTA-450321">
    <property type="pathway name" value="JNK (c-Jun kinases) phosphorylation and activation mediated by activated human TAK1"/>
</dbReference>
<dbReference type="Reactome" id="R-BTA-450408">
    <property type="pathway name" value="AUF1 (hnRNP D0) binds and destabilizes mRNA"/>
</dbReference>
<dbReference type="Reactome" id="R-BTA-4608870">
    <property type="pathway name" value="Asymmetric localization of PCP proteins"/>
</dbReference>
<dbReference type="Reactome" id="R-BTA-4641257">
    <property type="pathway name" value="Degradation of AXIN"/>
</dbReference>
<dbReference type="Reactome" id="R-BTA-4641258">
    <property type="pathway name" value="Degradation of DVL"/>
</dbReference>
<dbReference type="Reactome" id="R-BTA-4641263">
    <property type="pathway name" value="Regulation of FZD by ubiquitination"/>
</dbReference>
<dbReference type="Reactome" id="R-BTA-532668">
    <property type="pathway name" value="N-glycan trimming in the ER and Calnexin/Calreticulin cycle"/>
</dbReference>
<dbReference type="Reactome" id="R-BTA-5357905">
    <property type="pathway name" value="Regulation of TNFR1 signaling"/>
</dbReference>
<dbReference type="Reactome" id="R-BTA-5357956">
    <property type="pathway name" value="TNFR1-induced NF-kappa-B signaling pathway"/>
</dbReference>
<dbReference type="Reactome" id="R-BTA-5358346">
    <property type="pathway name" value="Hedgehog ligand biogenesis"/>
</dbReference>
<dbReference type="Reactome" id="R-BTA-5607761">
    <property type="pathway name" value="Dectin-1 mediated noncanonical NF-kB signaling"/>
</dbReference>
<dbReference type="Reactome" id="R-BTA-5607764">
    <property type="pathway name" value="CLEC7A (Dectin-1) signaling"/>
</dbReference>
<dbReference type="Reactome" id="R-BTA-5610780">
    <property type="pathway name" value="Degradation of GLI1 by the proteasome"/>
</dbReference>
<dbReference type="Reactome" id="R-BTA-5610785">
    <property type="pathway name" value="GLI3 is processed to GLI3R by the proteasome"/>
</dbReference>
<dbReference type="Reactome" id="R-BTA-5632684">
    <property type="pathway name" value="Hedgehog 'on' state"/>
</dbReference>
<dbReference type="Reactome" id="R-BTA-5654726">
    <property type="pathway name" value="Negative regulation of FGFR1 signaling"/>
</dbReference>
<dbReference type="Reactome" id="R-BTA-5654727">
    <property type="pathway name" value="Negative regulation of FGFR2 signaling"/>
</dbReference>
<dbReference type="Reactome" id="R-BTA-5654732">
    <property type="pathway name" value="Negative regulation of FGFR3 signaling"/>
</dbReference>
<dbReference type="Reactome" id="R-BTA-5654733">
    <property type="pathway name" value="Negative regulation of FGFR4 signaling"/>
</dbReference>
<dbReference type="Reactome" id="R-BTA-5655862">
    <property type="pathway name" value="Translesion synthesis by POLK"/>
</dbReference>
<dbReference type="Reactome" id="R-BTA-5656121">
    <property type="pathway name" value="Translesion synthesis by POLI"/>
</dbReference>
<dbReference type="Reactome" id="R-BTA-5656169">
    <property type="pathway name" value="Termination of translesion DNA synthesis"/>
</dbReference>
<dbReference type="Reactome" id="R-BTA-5668541">
    <property type="pathway name" value="TNFR2 non-canonical NF-kB pathway"/>
</dbReference>
<dbReference type="Reactome" id="R-BTA-5675221">
    <property type="pathway name" value="Negative regulation of MAPK pathway"/>
</dbReference>
<dbReference type="Reactome" id="R-BTA-5675482">
    <property type="pathway name" value="Regulation of necroptotic cell death"/>
</dbReference>
<dbReference type="Reactome" id="R-BTA-5676590">
    <property type="pathway name" value="NIK--&gt;noncanonical NF-kB signaling"/>
</dbReference>
<dbReference type="Reactome" id="R-BTA-5684264">
    <property type="pathway name" value="MAP3K8 (TPL2)-dependent MAPK1/3 activation"/>
</dbReference>
<dbReference type="Reactome" id="R-BTA-5685942">
    <property type="pathway name" value="HDR through Homologous Recombination (HRR)"/>
</dbReference>
<dbReference type="Reactome" id="R-BTA-5687128">
    <property type="pathway name" value="MAPK6/MAPK4 signaling"/>
</dbReference>
<dbReference type="Reactome" id="R-BTA-5689603">
    <property type="pathway name" value="UCH proteinases"/>
</dbReference>
<dbReference type="Reactome" id="R-BTA-5689877">
    <property type="pathway name" value="Josephin domain DUBs"/>
</dbReference>
<dbReference type="Reactome" id="R-BTA-5689880">
    <property type="pathway name" value="Ub-specific processing proteases"/>
</dbReference>
<dbReference type="Reactome" id="R-BTA-5689896">
    <property type="pathway name" value="Ovarian tumor domain proteases"/>
</dbReference>
<dbReference type="Reactome" id="R-BTA-5689901">
    <property type="pathway name" value="Metalloprotease DUBs"/>
</dbReference>
<dbReference type="Reactome" id="R-BTA-5693565">
    <property type="pathway name" value="Recruitment and ATM-mediated phosphorylation of repair and signaling proteins at DNA double strand breaks"/>
</dbReference>
<dbReference type="Reactome" id="R-BTA-5693607">
    <property type="pathway name" value="Processing of DNA double-strand break ends"/>
</dbReference>
<dbReference type="Reactome" id="R-BTA-5696394">
    <property type="pathway name" value="DNA Damage Recognition in GG-NER"/>
</dbReference>
<dbReference type="Reactome" id="R-BTA-5696395">
    <property type="pathway name" value="Formation of Incision Complex in GG-NER"/>
</dbReference>
<dbReference type="Reactome" id="R-BTA-5696397">
    <property type="pathway name" value="Gap-filling DNA repair synthesis and ligation in GG-NER"/>
</dbReference>
<dbReference type="Reactome" id="R-BTA-5696400">
    <property type="pathway name" value="Dual Incision in GG-NER"/>
</dbReference>
<dbReference type="Reactome" id="R-BTA-6781823">
    <property type="pathway name" value="Formation of TC-NER Pre-Incision Complex"/>
</dbReference>
<dbReference type="Reactome" id="R-BTA-6782135">
    <property type="pathway name" value="Dual incision in TC-NER"/>
</dbReference>
<dbReference type="Reactome" id="R-BTA-6782210">
    <property type="pathway name" value="Gap-filling DNA repair synthesis and ligation in TC-NER"/>
</dbReference>
<dbReference type="Reactome" id="R-BTA-6783310">
    <property type="pathway name" value="Fanconi Anemia Pathway"/>
</dbReference>
<dbReference type="Reactome" id="R-BTA-6804756">
    <property type="pathway name" value="Regulation of TP53 Activity through Phosphorylation"/>
</dbReference>
<dbReference type="Reactome" id="R-BTA-6804757">
    <property type="pathway name" value="Regulation of TP53 Degradation"/>
</dbReference>
<dbReference type="Reactome" id="R-BTA-6804760">
    <property type="pathway name" value="Regulation of TP53 Activity through Methylation"/>
</dbReference>
<dbReference type="Reactome" id="R-BTA-6807004">
    <property type="pathway name" value="Negative regulation of MET activity"/>
</dbReference>
<dbReference type="Reactome" id="R-BTA-68867">
    <property type="pathway name" value="Assembly of the pre-replicative complex"/>
</dbReference>
<dbReference type="Reactome" id="R-BTA-68949">
    <property type="pathway name" value="Orc1 removal from chromatin"/>
</dbReference>
<dbReference type="Reactome" id="R-BTA-69017">
    <property type="pathway name" value="CDK-mediated phosphorylation and removal of Cdc6"/>
</dbReference>
<dbReference type="Reactome" id="R-BTA-69231">
    <property type="pathway name" value="Cyclin D associated events in G1"/>
</dbReference>
<dbReference type="Reactome" id="R-BTA-69481">
    <property type="pathway name" value="G2/M Checkpoints"/>
</dbReference>
<dbReference type="Reactome" id="R-BTA-69601">
    <property type="pathway name" value="Ubiquitin Mediated Degradation of Phosphorylated Cdc25A"/>
</dbReference>
<dbReference type="Reactome" id="R-BTA-75815">
    <property type="pathway name" value="Ubiquitin-dependent degradation of Cyclin D"/>
</dbReference>
<dbReference type="Reactome" id="R-BTA-8849469">
    <property type="pathway name" value="PTK6 Regulates RTKs and Their Effectors AKT1 and DOK1"/>
</dbReference>
<dbReference type="Reactome" id="R-BTA-8852276">
    <property type="pathway name" value="The role of GTSE1 in G2/M progression after G2 checkpoint"/>
</dbReference>
<dbReference type="Reactome" id="R-BTA-8854050">
    <property type="pathway name" value="FBXL7 down-regulates AURKA during mitotic entry and in early mitosis"/>
</dbReference>
<dbReference type="Reactome" id="R-BTA-8856825">
    <property type="pathway name" value="Cargo recognition for clathrin-mediated endocytosis"/>
</dbReference>
<dbReference type="Reactome" id="R-BTA-8856828">
    <property type="pathway name" value="Clathrin-mediated endocytosis"/>
</dbReference>
<dbReference type="Reactome" id="R-BTA-8863795">
    <property type="pathway name" value="Downregulation of ERBB2 signaling"/>
</dbReference>
<dbReference type="Reactome" id="R-BTA-8866427">
    <property type="pathway name" value="VLDLR internalisation and degradation"/>
</dbReference>
<dbReference type="Reactome" id="R-BTA-8866652">
    <property type="pathway name" value="Synthesis of active ubiquitin: roles of E1 and E2 enzymes"/>
</dbReference>
<dbReference type="Reactome" id="R-BTA-8866654">
    <property type="pathway name" value="E3 ubiquitin ligases ubiquitinate target proteins"/>
</dbReference>
<dbReference type="Reactome" id="R-BTA-8939236">
    <property type="pathway name" value="RUNX1 regulates transcription of genes involved in differentiation of HSCs"/>
</dbReference>
<dbReference type="Reactome" id="R-BTA-8939902">
    <property type="pathway name" value="Regulation of RUNX2 expression and activity"/>
</dbReference>
<dbReference type="Reactome" id="R-BTA-8941858">
    <property type="pathway name" value="Regulation of RUNX3 expression and activity"/>
</dbReference>
<dbReference type="Reactome" id="R-BTA-8948747">
    <property type="pathway name" value="Regulation of PTEN localization"/>
</dbReference>
<dbReference type="Reactome" id="R-BTA-8948751">
    <property type="pathway name" value="Regulation of PTEN stability and activity"/>
</dbReference>
<dbReference type="Reactome" id="R-BTA-8951664">
    <property type="pathway name" value="Neddylation"/>
</dbReference>
<dbReference type="Reactome" id="R-BTA-901032">
    <property type="pathway name" value="ER Quality Control Compartment (ERQC)"/>
</dbReference>
<dbReference type="Reactome" id="R-BTA-9010553">
    <property type="pathway name" value="Regulation of expression of SLITs and ROBOs"/>
</dbReference>
<dbReference type="Reactome" id="R-BTA-9020702">
    <property type="pathway name" value="Interleukin-1 signaling"/>
</dbReference>
<dbReference type="Reactome" id="R-BTA-9033241">
    <property type="pathway name" value="Peroxisomal protein import"/>
</dbReference>
<dbReference type="Reactome" id="R-BTA-909733">
    <property type="pathway name" value="Interferon alpha/beta signaling"/>
</dbReference>
<dbReference type="Reactome" id="R-BTA-912631">
    <property type="pathway name" value="Regulation of signaling by CBL"/>
</dbReference>
<dbReference type="Reactome" id="R-BTA-917729">
    <property type="pathway name" value="Endosomal Sorting Complex Required For Transport (ESCRT)"/>
</dbReference>
<dbReference type="Reactome" id="R-BTA-917937">
    <property type="pathway name" value="Iron uptake and transport"/>
</dbReference>
<dbReference type="Reactome" id="R-BTA-936440">
    <property type="pathway name" value="Negative regulators of DDX58/IFIH1 signaling"/>
</dbReference>
<dbReference type="Reactome" id="R-BTA-936964">
    <property type="pathway name" value="Activation of IRF3, IRF7 mediated by TBK1, IKKEpsilon (IKBKE)"/>
</dbReference>
<dbReference type="Reactome" id="R-BTA-937041">
    <property type="pathway name" value="IKK complex recruitment mediated by RIP1"/>
</dbReference>
<dbReference type="Reactome" id="R-BTA-937042">
    <property type="pathway name" value="IRAK2 mediated activation of TAK1 complex"/>
</dbReference>
<dbReference type="Reactome" id="R-BTA-937072">
    <property type="pathway name" value="TRAF6-mediated induction of TAK1 complex within TLR4 complex"/>
</dbReference>
<dbReference type="Reactome" id="R-BTA-9645460">
    <property type="pathway name" value="Alpha-protein kinase 1 signaling pathway"/>
</dbReference>
<dbReference type="Reactome" id="R-BTA-9646399">
    <property type="pathway name" value="Aggrephagy"/>
</dbReference>
<dbReference type="Reactome" id="R-BTA-9648002">
    <property type="pathway name" value="RAS processing"/>
</dbReference>
<dbReference type="Reactome" id="R-BTA-9664873">
    <property type="pathway name" value="Pexophagy"/>
</dbReference>
<dbReference type="Reactome" id="R-BTA-9705462">
    <property type="pathway name" value="Inactivation of CSF3 (G-CSF) signaling"/>
</dbReference>
<dbReference type="Reactome" id="R-BTA-9706369">
    <property type="pathway name" value="Negative regulation of FLT3"/>
</dbReference>
<dbReference type="Reactome" id="R-BTA-9708530">
    <property type="pathway name" value="Regulation of BACH1 activity"/>
</dbReference>
<dbReference type="Reactome" id="R-BTA-975163">
    <property type="pathway name" value="IRAK2 mediated activation of TAK1 complex upon TLR7/8 or 9 stimulation"/>
</dbReference>
<dbReference type="Reactome" id="R-BTA-9755511">
    <property type="pathway name" value="KEAP1-NFE2L2 pathway"/>
</dbReference>
<dbReference type="Reactome" id="R-BTA-9758274">
    <property type="pathway name" value="Regulation of NF-kappa B signaling"/>
</dbReference>
<dbReference type="Reactome" id="R-BTA-9762114">
    <property type="pathway name" value="GSK3B and BTRC:CUL1-mediated-degradation of NFE2L2"/>
</dbReference>
<dbReference type="Reactome" id="R-BTA-9824878">
    <property type="pathway name" value="Regulation of TBK1, IKKEpsilon (IKBKE)-mediated activation of IRF3, IRF7"/>
</dbReference>
<dbReference type="Reactome" id="R-BTA-983168">
    <property type="pathway name" value="Antigen processing: Ubiquitination &amp; Proteasome degradation"/>
</dbReference>
<dbReference type="Reactome" id="R-BTA-9861718">
    <property type="pathway name" value="Regulation of pyruvate metabolism"/>
</dbReference>
<dbReference type="CD-CODE" id="D7FE2080">
    <property type="entry name" value="Nucleolus"/>
</dbReference>
<dbReference type="EvolutionaryTrace" id="P0CH28"/>
<dbReference type="Proteomes" id="UP000009136">
    <property type="component" value="Chromosome 17"/>
</dbReference>
<dbReference type="Bgee" id="ENSBTAG00000032436">
    <property type="expression patterns" value="Expressed in intramuscular adipose tissue and 108 other cell types or tissues"/>
</dbReference>
<dbReference type="GO" id="GO:0005737">
    <property type="term" value="C:cytoplasm"/>
    <property type="evidence" value="ECO:0000318"/>
    <property type="project" value="GO_Central"/>
</dbReference>
<dbReference type="GO" id="GO:0005741">
    <property type="term" value="C:mitochondrial outer membrane"/>
    <property type="evidence" value="ECO:0007669"/>
    <property type="project" value="UniProtKB-SubCell"/>
</dbReference>
<dbReference type="GO" id="GO:0005634">
    <property type="term" value="C:nucleus"/>
    <property type="evidence" value="ECO:0000318"/>
    <property type="project" value="GO_Central"/>
</dbReference>
<dbReference type="GO" id="GO:0031386">
    <property type="term" value="F:protein tag activity"/>
    <property type="evidence" value="ECO:0000318"/>
    <property type="project" value="GO_Central"/>
</dbReference>
<dbReference type="GO" id="GO:0031625">
    <property type="term" value="F:ubiquitin protein ligase binding"/>
    <property type="evidence" value="ECO:0000318"/>
    <property type="project" value="GO_Central"/>
</dbReference>
<dbReference type="GO" id="GO:0019941">
    <property type="term" value="P:modification-dependent protein catabolic process"/>
    <property type="evidence" value="ECO:0000318"/>
    <property type="project" value="GO_Central"/>
</dbReference>
<dbReference type="GO" id="GO:0016567">
    <property type="term" value="P:protein ubiquitination"/>
    <property type="evidence" value="ECO:0000318"/>
    <property type="project" value="GO_Central"/>
</dbReference>
<dbReference type="CDD" id="cd01803">
    <property type="entry name" value="Ubl_ubiquitin"/>
    <property type="match status" value="9"/>
</dbReference>
<dbReference type="FunFam" id="3.10.20.90:FF:000158">
    <property type="entry name" value="Polyubiquitin 5"/>
    <property type="match status" value="9"/>
</dbReference>
<dbReference type="Gene3D" id="3.10.20.90">
    <property type="entry name" value="Phosphatidylinositol 3-kinase Catalytic Subunit, Chain A, domain 1"/>
    <property type="match status" value="9"/>
</dbReference>
<dbReference type="InterPro" id="IPR000626">
    <property type="entry name" value="Ubiquitin-like_dom"/>
</dbReference>
<dbReference type="InterPro" id="IPR029071">
    <property type="entry name" value="Ubiquitin-like_domsf"/>
</dbReference>
<dbReference type="InterPro" id="IPR019954">
    <property type="entry name" value="Ubiquitin_CS"/>
</dbReference>
<dbReference type="InterPro" id="IPR019956">
    <property type="entry name" value="Ubiquitin_dom"/>
</dbReference>
<dbReference type="InterPro" id="IPR050158">
    <property type="entry name" value="Ubiquitin_ubiquitin-like"/>
</dbReference>
<dbReference type="PANTHER" id="PTHR10666">
    <property type="entry name" value="UBIQUITIN"/>
    <property type="match status" value="1"/>
</dbReference>
<dbReference type="Pfam" id="PF00240">
    <property type="entry name" value="ubiquitin"/>
    <property type="match status" value="9"/>
</dbReference>
<dbReference type="PRINTS" id="PR00348">
    <property type="entry name" value="UBIQUITIN"/>
</dbReference>
<dbReference type="SMART" id="SM00213">
    <property type="entry name" value="UBQ"/>
    <property type="match status" value="9"/>
</dbReference>
<dbReference type="SUPFAM" id="SSF54236">
    <property type="entry name" value="Ubiquitin-like"/>
    <property type="match status" value="9"/>
</dbReference>
<dbReference type="PROSITE" id="PS00299">
    <property type="entry name" value="UBIQUITIN_1"/>
    <property type="match status" value="9"/>
</dbReference>
<dbReference type="PROSITE" id="PS50053">
    <property type="entry name" value="UBIQUITIN_2"/>
    <property type="match status" value="9"/>
</dbReference>
<name>UBC_BOVIN</name>
<comment type="function">
    <molecule>Ubiquitin</molecule>
    <text evidence="2">Exists either covalently attached to another protein, or free (unanchored). When covalently bound, it is conjugated to target proteins via an isopeptide bond either as a monomer (monoubiquitin), a polymer linked via different Lys residues of the ubiquitin (polyubiquitin chains) or a linear polymer linked via the initiator Met of the ubiquitin (linear polyubiquitin chains). Polyubiquitin chains, when attached to a target protein, have different functions depending on the Lys residue of the ubiquitin that is linked: Lys-6-linked may be involved in DNA repair; Lys-11-linked is involved in ERAD (endoplasmic reticulum-associated degradation) and in cell-cycle regulation; Lys-29-linked is involved in proteotoxic stress response and cell cycle; Lys-33-linked is involved in kinase modification; Lys-48-linked is involved in protein degradation via the proteasome; Lys-63-linked is involved in endocytosis, DNA-damage responses as well as in signaling processes leading to activation of the transcription factor NF-kappa-B. Linear polymer chains formed via attachment by the initiator Met lead to cell signaling. Ubiquitin is usually conjugated to Lys residues of target proteins, however, in rare cases, conjugation to Cys or Ser residues has been observed. When polyubiquitin is free (unanchored-polyubiquitin), it also has distinct roles, such as in activation of protein kinases, and in signaling (By similarity). During ubiquitination, the acceptor ubiquitin is positioned in the active site via direct interaction with the E2 ubiquitin-conjugating enzymes such as UBE2R2 (By similarity). As a monoubiquitin, its C-terminal glycine is recognized as a C-degron by Cul2-RING (CRL2) E3 ubiquitin-protein ligase complexes (By similarity).</text>
</comment>
<comment type="subcellular location">
    <molecule>Ubiquitin</molecule>
    <subcellularLocation>
        <location evidence="1">Cytoplasm</location>
    </subcellularLocation>
    <subcellularLocation>
        <location evidence="1">Nucleus</location>
    </subcellularLocation>
    <subcellularLocation>
        <location evidence="2">Mitochondrion outer membrane</location>
        <topology evidence="2">Peripheral membrane protein</topology>
    </subcellularLocation>
</comment>
<comment type="PTM">
    <molecule>Ubiquitin</molecule>
    <text evidence="2">Phosphorylated at Ser-65 by PINK1 during mitophagy. Phosphorylated ubiquitin specifically binds and activates parkin (PRKN), triggering mitophagy. Phosphorylation does not affect E1-mediated E2 charging of ubiquitin but affects discharging of E2 enzymes to form polyubiquitin chains. It also affects deubiquitination by deubiquitinase enzymes such as USP30.</text>
</comment>
<comment type="PTM">
    <molecule>Ubiquitin</molecule>
    <text evidence="2">Mono-ADP-ribosylated at the C-terminus by PARP9, a component of the PPAR9-DTX3L complex. ADP-ribosylation requires processing by E1 and E2 enzymes and prevents ubiquitin conjugation to substrates such as histones.</text>
</comment>
<comment type="miscellaneous">
    <text>Ubiquitin is encoded by 4 different genes. Uba52 and Rps27a genes code for a single copy of ubiquitin fused to the ribosomal proteins eL40 and eS31, respectively. UBB and UBC genes code for a polyubiquitin precursor with exact head to tail repeats, the number of repeats differ between species and strains.</text>
</comment>
<comment type="miscellaneous">
    <text>For the sake of clarity sequence features are annotated only for the first chain, and are not repeated for each of the following chains.</text>
</comment>
<comment type="similarity">
    <text evidence="4">Belongs to the ubiquitin family.</text>
</comment>
<sequence>MQIFVKTLTGKTITLEVEPSDTIENVKGKIQEKEGIPPDQQRLIFAGKQLEDGRTLSDYNIQKESTLHLVLRLRGGMQIFVKTLTGKTITLEVEPSDTIENVKAKIQDKEGIPPDQQRLIFAGKQLEDGRTLSDYNIQKESTLHLVLRLRGGMQIFVKTLTGKTITLEVEPSDTIENVKAKIQDKEGIPPDQQRLIFAGKQLEDGRTLSDYNIQKESTLHLVLRLRGGMQIFVKTLTGKTITLEVEPSDTIENVKAKIQDKEGIPPDQQRLIFAGKQLEDGRTLSDYNIQKESTLHLVLRLRGGMQIFVKTLTGKTITLEVEPSDTIENVKAKIQDKEGIPPDQQRLIFAGKQLEDGRTLSDYNIQKESTLHLVLRLRGGMQIFVKTLTGKTITLEVEPSDTIENVKAKIQDKEGIPPDQQRLIFAGKQLEDGRTLSDYNIQKESTLHLVLRLRGGMQIFVKTLTGKTITLEVEPSDTIENVKAKIQDKEGIPPDQQRLIFAGKQLEDGRTLSDYNIQKESTLHLVLRLRGGMQIFVKTLTGKTITLEVEPSDTIENVKAKIQDKEGIPPDQQRLIFAGKQLEDGRTLSDYNIQKESTLHLVLRLRGGMQIFVKTLTGKTITLEVEPSDTIENVKAKIQDKEGIPPDQQRLIFAGKQLEDGRTLSDYNIQKESTLHLVLRLRGGVLSSPF</sequence>
<proteinExistence type="evidence at protein level"/>
<gene>
    <name type="primary">UBC</name>
</gene>
<feature type="chain" id="PRO_0000114792" description="Ubiquitin-related">
    <location>
        <begin position="1"/>
        <end position="76"/>
    </location>
</feature>
<feature type="chain" id="PRO_0000396145" description="Ubiquitin">
    <location>
        <begin position="77"/>
        <end position="152"/>
    </location>
</feature>
<feature type="chain" id="PRO_0000396146" description="Ubiquitin">
    <location>
        <begin position="153"/>
        <end position="228"/>
    </location>
</feature>
<feature type="chain" id="PRO_0000396147" description="Ubiquitin">
    <location>
        <begin position="229"/>
        <end position="304"/>
    </location>
</feature>
<feature type="chain" id="PRO_0000396148" description="Ubiquitin">
    <location>
        <begin position="305"/>
        <end position="380"/>
    </location>
</feature>
<feature type="chain" id="PRO_0000396149" description="Ubiquitin">
    <location>
        <begin position="381"/>
        <end position="456"/>
    </location>
</feature>
<feature type="chain" id="PRO_0000396150" description="Ubiquitin">
    <location>
        <begin position="457"/>
        <end position="532"/>
    </location>
</feature>
<feature type="chain" id="PRO_0000396151" description="Ubiquitin">
    <location>
        <begin position="533"/>
        <end position="608"/>
    </location>
</feature>
<feature type="chain" id="PRO_0000396152" description="Ubiquitin">
    <location>
        <begin position="609"/>
        <end position="684"/>
    </location>
</feature>
<feature type="propeptide" id="PRO_0000396153">
    <location>
        <begin position="685"/>
        <end position="690"/>
    </location>
</feature>
<feature type="domain" description="Ubiquitin-like 1" evidence="3">
    <location>
        <begin position="1"/>
        <end position="76"/>
    </location>
</feature>
<feature type="domain" description="Ubiquitin-like 2" evidence="3">
    <location>
        <begin position="77"/>
        <end position="152"/>
    </location>
</feature>
<feature type="domain" description="Ubiquitin-like 3" evidence="3">
    <location>
        <begin position="153"/>
        <end position="228"/>
    </location>
</feature>
<feature type="domain" description="Ubiquitin-like 4" evidence="3">
    <location>
        <begin position="229"/>
        <end position="304"/>
    </location>
</feature>
<feature type="domain" description="Ubiquitin-like 5" evidence="3">
    <location>
        <begin position="305"/>
        <end position="380"/>
    </location>
</feature>
<feature type="domain" description="Ubiquitin-like 6" evidence="3">
    <location>
        <begin position="381"/>
        <end position="456"/>
    </location>
</feature>
<feature type="domain" description="Ubiquitin-like 7" evidence="3">
    <location>
        <begin position="457"/>
        <end position="532"/>
    </location>
</feature>
<feature type="domain" description="Ubiquitin-like 8" evidence="3">
    <location>
        <begin position="533"/>
        <end position="608"/>
    </location>
</feature>
<feature type="domain" description="Ubiquitin-like 9" evidence="3">
    <location>
        <begin position="609"/>
        <end position="684"/>
    </location>
</feature>
<feature type="site" description="Interacts with activating enzyme">
    <location>
        <position position="54"/>
    </location>
</feature>
<feature type="site" description="Essential for function">
    <location>
        <position position="68"/>
    </location>
</feature>
<feature type="site" description="Interacts with activating enzyme">
    <location>
        <position position="72"/>
    </location>
</feature>
<feature type="modified residue" description="Phosphoserine; by PINK1" evidence="2">
    <location>
        <position position="65"/>
    </location>
</feature>
<feature type="modified residue" description="ADP-ribosylglycine" evidence="2">
    <location>
        <position position="76"/>
    </location>
</feature>
<feature type="modified residue" description="Phosphoserine" evidence="2">
    <location>
        <position position="141"/>
    </location>
</feature>
<feature type="cross-link" description="Glycyl lysine isopeptide (Lys-Gly) (interchain with G-Cter in ubiquitin)" evidence="2">
    <location>
        <position position="6"/>
    </location>
</feature>
<feature type="cross-link" description="Glycyl lysine isopeptide (Lys-Gly) (interchain with G-Cter in ubiquitin)" evidence="2">
    <location>
        <position position="11"/>
    </location>
</feature>
<feature type="cross-link" description="Glycyl lysine isopeptide (Lys-Gly) (interchain with G-Cter in ubiquitin)" evidence="2">
    <location>
        <position position="27"/>
    </location>
</feature>
<feature type="cross-link" description="Glycyl lysine isopeptide (Lys-Gly) (interchain with G-Cter in ubiquitin)" evidence="2">
    <location>
        <position position="29"/>
    </location>
</feature>
<feature type="cross-link" description="Glycyl lysine isopeptide (Lys-Gly) (interchain with G-Cter in ubiquitin)" evidence="2">
    <location>
        <position position="33"/>
    </location>
</feature>
<feature type="cross-link" description="Glycyl lysine isopeptide (Lys-Gly) (interchain with G-Cter in ubiquitin)" evidence="2">
    <location>
        <position position="48"/>
    </location>
</feature>
<feature type="cross-link" description="Glycyl lysine isopeptide (Lys-Gly) (interchain with G-Cter in ubiquitin)" evidence="2">
    <location>
        <position position="63"/>
    </location>
</feature>
<feature type="cross-link" description="Glycyl lysine isopeptide (Gly-Lys) (interchain with K-? in acceptor proteins)" evidence="3">
    <location>
        <position position="76"/>
    </location>
</feature>
<feature type="sequence conflict" description="In Ref. 2; AAA30719." evidence="4" ref="2">
    <original>MQIFVK</original>
    <variation>VLSSPF</variation>
    <location>
        <begin position="609"/>
        <end position="614"/>
    </location>
</feature>
<feature type="strand" evidence="7">
    <location>
        <begin position="610"/>
        <end position="615"/>
    </location>
</feature>
<feature type="strand" evidence="6">
    <location>
        <begin position="616"/>
        <end position="618"/>
    </location>
</feature>
<feature type="strand" evidence="7">
    <location>
        <begin position="620"/>
        <end position="624"/>
    </location>
</feature>
<feature type="helix" evidence="7">
    <location>
        <begin position="631"/>
        <end position="642"/>
    </location>
</feature>
<feature type="helix" evidence="7">
    <location>
        <begin position="646"/>
        <end position="648"/>
    </location>
</feature>
<feature type="strand" evidence="7">
    <location>
        <begin position="649"/>
        <end position="653"/>
    </location>
</feature>
<feature type="strand" evidence="5">
    <location>
        <begin position="660"/>
        <end position="663"/>
    </location>
</feature>
<feature type="helix" evidence="7">
    <location>
        <begin position="665"/>
        <end position="667"/>
    </location>
</feature>
<feature type="strand" evidence="7">
    <location>
        <begin position="674"/>
        <end position="679"/>
    </location>
</feature>
<keyword id="KW-0002">3D-structure</keyword>
<keyword id="KW-0013">ADP-ribosylation</keyword>
<keyword id="KW-0963">Cytoplasm</keyword>
<keyword id="KW-0903">Direct protein sequencing</keyword>
<keyword id="KW-1017">Isopeptide bond</keyword>
<keyword id="KW-0472">Membrane</keyword>
<keyword id="KW-0496">Mitochondrion</keyword>
<keyword id="KW-1000">Mitochondrion outer membrane</keyword>
<keyword id="KW-0539">Nucleus</keyword>
<keyword id="KW-0597">Phosphoprotein</keyword>
<keyword id="KW-1185">Reference proteome</keyword>
<keyword id="KW-0677">Repeat</keyword>
<keyword id="KW-0832">Ubl conjugation</keyword>
<accession>P0CH28</accession>
<accession>O97577</accession>
<accession>P02248</accession>
<accession>P02249</accession>
<accession>P02250</accession>
<accession>P0CG52</accession>
<accession>P62990</accession>
<accession>P80169</accession>
<accession>Q01235</accession>
<accession>Q24K23</accession>
<accession>Q28169</accession>
<accession>Q28170</accession>
<accession>Q29120</accession>
<accession>Q3T0V5</accession>
<accession>Q3ZCE3</accession>
<accession>Q862C1</accession>
<accession>Q862F4</accession>
<accession>Q862M4</accession>
<accession>Q862T5</accession>
<accession>Q862X8</accession>
<accession>Q91887</accession>
<accession>Q91888</accession>
<reference key="1">
    <citation type="journal article" date="2009" name="Science">
        <title>The genome sequence of taurine cattle: a window to ruminant biology and evolution.</title>
        <authorList>
            <consortium name="The bovine genome sequencing and analysis consortium"/>
        </authorList>
    </citation>
    <scope>NUCLEOTIDE SEQUENCE [LARGE SCALE GENOMIC DNA]</scope>
    <source>
        <strain>Hereford</strain>
    </source>
</reference>
<reference key="2">
    <citation type="journal article" date="1991" name="Virology">
        <title>Viral cytopathogenicity correlated with integration of ubiquitin-coding sequences.</title>
        <authorList>
            <person name="Meyers G."/>
            <person name="Tautz N."/>
            <person name="Dubovi E.J."/>
            <person name="Thiel H.-J."/>
        </authorList>
    </citation>
    <scope>NUCLEOTIDE SEQUENCE [MRNA] OF 446-690</scope>
    <source>
        <tissue>Kidney</tissue>
    </source>
</reference>
<reference key="3">
    <citation type="journal article" date="1975" name="Biochemistry">
        <title>The complete amino acid sequence of ubiquitin, an adenylate cyclase stimulating polypeptide probably universal in living cells.</title>
        <authorList>
            <person name="Schlesinger D.H."/>
            <person name="Goldstein G."/>
            <person name="Niall H.D."/>
        </authorList>
    </citation>
    <scope>PROTEIN SEQUENCE OF 1-74</scope>
</reference>
<reference key="4">
    <citation type="journal article" date="1980" name="Biochem. Biophys. Res. Commun.">
        <title>The biosynthesis of ubiquitin by parathyroid gland.</title>
        <authorList>
            <person name="Hamilton J.W."/>
            <person name="Rouse J.B."/>
        </authorList>
    </citation>
    <scope>PROTEIN SEQUENCE OF 1-50</scope>
</reference>
<reference key="5">
    <citation type="journal article" date="1992" name="Eur. J. Biochem.">
        <title>Ganglioside binding proteins of calf brain with ubiquitin-like N-terminals.</title>
        <authorList>
            <person name="Zdebska E."/>
            <person name="Antoniewicz J."/>
            <person name="Nilsson B."/>
            <person name="Sandhoff K."/>
            <person name="Fuerst W."/>
            <person name="Janik P."/>
            <person name="Koscielak J."/>
        </authorList>
    </citation>
    <scope>PROTEIN SEQUENCE OF 1-20</scope>
    <source>
        <tissue>Brain</tissue>
    </source>
</reference>
<reference key="6">
    <citation type="journal article" date="1992" name="J. Biol. Chem.">
        <title>Structure of a diubiquitin conjugate and a model for interaction with ubiquitin conjugating enzyme (E2).</title>
        <authorList>
            <person name="Cook W.J."/>
            <person name="Jeffrey L.C."/>
            <person name="Carson M."/>
            <person name="Chen Z."/>
            <person name="Pickart C.M."/>
        </authorList>
    </citation>
    <scope>X-RAY CRYSTALLOGRAPHY (2.3 ANGSTROMS)</scope>
</reference>
<evidence type="ECO:0000250" key="1"/>
<evidence type="ECO:0000250" key="2">
    <source>
        <dbReference type="UniProtKB" id="P0CG48"/>
    </source>
</evidence>
<evidence type="ECO:0000255" key="3">
    <source>
        <dbReference type="PROSITE-ProRule" id="PRU00214"/>
    </source>
</evidence>
<evidence type="ECO:0000305" key="4"/>
<evidence type="ECO:0007829" key="5">
    <source>
        <dbReference type="PDB" id="1WR6"/>
    </source>
</evidence>
<evidence type="ECO:0007829" key="6">
    <source>
        <dbReference type="PDB" id="2C7M"/>
    </source>
</evidence>
<evidence type="ECO:0007829" key="7">
    <source>
        <dbReference type="PDB" id="2WWZ"/>
    </source>
</evidence>